<evidence type="ECO:0000255" key="1">
    <source>
        <dbReference type="PROSITE-ProRule" id="PRU00080"/>
    </source>
</evidence>
<evidence type="ECO:0000305" key="2"/>
<reference key="1">
    <citation type="journal article" date="1999" name="Nature">
        <title>Sequence and analysis of chromosome 4 of the plant Arabidopsis thaliana.</title>
        <authorList>
            <person name="Mayer K.F.X."/>
            <person name="Schueller C."/>
            <person name="Wambutt R."/>
            <person name="Murphy G."/>
            <person name="Volckaert G."/>
            <person name="Pohl T."/>
            <person name="Duesterhoeft A."/>
            <person name="Stiekema W."/>
            <person name="Entian K.-D."/>
            <person name="Terryn N."/>
            <person name="Harris B."/>
            <person name="Ansorge W."/>
            <person name="Brandt P."/>
            <person name="Grivell L.A."/>
            <person name="Rieger M."/>
            <person name="Weichselgartner M."/>
            <person name="de Simone V."/>
            <person name="Obermaier B."/>
            <person name="Mache R."/>
            <person name="Mueller M."/>
            <person name="Kreis M."/>
            <person name="Delseny M."/>
            <person name="Puigdomenech P."/>
            <person name="Watson M."/>
            <person name="Schmidtheini T."/>
            <person name="Reichert B."/>
            <person name="Portetelle D."/>
            <person name="Perez-Alonso M."/>
            <person name="Boutry M."/>
            <person name="Bancroft I."/>
            <person name="Vos P."/>
            <person name="Hoheisel J."/>
            <person name="Zimmermann W."/>
            <person name="Wedler H."/>
            <person name="Ridley P."/>
            <person name="Langham S.-A."/>
            <person name="McCullagh B."/>
            <person name="Bilham L."/>
            <person name="Robben J."/>
            <person name="van der Schueren J."/>
            <person name="Grymonprez B."/>
            <person name="Chuang Y.-J."/>
            <person name="Vandenbussche F."/>
            <person name="Braeken M."/>
            <person name="Weltjens I."/>
            <person name="Voet M."/>
            <person name="Bastiaens I."/>
            <person name="Aert R."/>
            <person name="Defoor E."/>
            <person name="Weitzenegger T."/>
            <person name="Bothe G."/>
            <person name="Ramsperger U."/>
            <person name="Hilbert H."/>
            <person name="Braun M."/>
            <person name="Holzer E."/>
            <person name="Brandt A."/>
            <person name="Peters S."/>
            <person name="van Staveren M."/>
            <person name="Dirkse W."/>
            <person name="Mooijman P."/>
            <person name="Klein Lankhorst R."/>
            <person name="Rose M."/>
            <person name="Hauf J."/>
            <person name="Koetter P."/>
            <person name="Berneiser S."/>
            <person name="Hempel S."/>
            <person name="Feldpausch M."/>
            <person name="Lamberth S."/>
            <person name="Van den Daele H."/>
            <person name="De Keyser A."/>
            <person name="Buysshaert C."/>
            <person name="Gielen J."/>
            <person name="Villarroel R."/>
            <person name="De Clercq R."/>
            <person name="van Montagu M."/>
            <person name="Rogers J."/>
            <person name="Cronin A."/>
            <person name="Quail M.A."/>
            <person name="Bray-Allen S."/>
            <person name="Clark L."/>
            <person name="Doggett J."/>
            <person name="Hall S."/>
            <person name="Kay M."/>
            <person name="Lennard N."/>
            <person name="McLay K."/>
            <person name="Mayes R."/>
            <person name="Pettett A."/>
            <person name="Rajandream M.A."/>
            <person name="Lyne M."/>
            <person name="Benes V."/>
            <person name="Rechmann S."/>
            <person name="Borkova D."/>
            <person name="Bloecker H."/>
            <person name="Scharfe M."/>
            <person name="Grimm M."/>
            <person name="Loehnert T.-H."/>
            <person name="Dose S."/>
            <person name="de Haan M."/>
            <person name="Maarse A.C."/>
            <person name="Schaefer M."/>
            <person name="Mueller-Auer S."/>
            <person name="Gabel C."/>
            <person name="Fuchs M."/>
            <person name="Fartmann B."/>
            <person name="Granderath K."/>
            <person name="Dauner D."/>
            <person name="Herzl A."/>
            <person name="Neumann S."/>
            <person name="Argiriou A."/>
            <person name="Vitale D."/>
            <person name="Liguori R."/>
            <person name="Piravandi E."/>
            <person name="Massenet O."/>
            <person name="Quigley F."/>
            <person name="Clabauld G."/>
            <person name="Muendlein A."/>
            <person name="Felber R."/>
            <person name="Schnabl S."/>
            <person name="Hiller R."/>
            <person name="Schmidt W."/>
            <person name="Lecharny A."/>
            <person name="Aubourg S."/>
            <person name="Chefdor F."/>
            <person name="Cooke R."/>
            <person name="Berger C."/>
            <person name="Monfort A."/>
            <person name="Casacuberta E."/>
            <person name="Gibbons T."/>
            <person name="Weber N."/>
            <person name="Vandenbol M."/>
            <person name="Bargues M."/>
            <person name="Terol J."/>
            <person name="Torres A."/>
            <person name="Perez-Perez A."/>
            <person name="Purnelle B."/>
            <person name="Bent E."/>
            <person name="Johnson S."/>
            <person name="Tacon D."/>
            <person name="Jesse T."/>
            <person name="Heijnen L."/>
            <person name="Schwarz S."/>
            <person name="Scholler P."/>
            <person name="Heber S."/>
            <person name="Francs P."/>
            <person name="Bielke C."/>
            <person name="Frishman D."/>
            <person name="Haase D."/>
            <person name="Lemcke K."/>
            <person name="Mewes H.-W."/>
            <person name="Stocker S."/>
            <person name="Zaccaria P."/>
            <person name="Bevan M."/>
            <person name="Wilson R.K."/>
            <person name="de la Bastide M."/>
            <person name="Habermann K."/>
            <person name="Parnell L."/>
            <person name="Dedhia N."/>
            <person name="Gnoj L."/>
            <person name="Schutz K."/>
            <person name="Huang E."/>
            <person name="Spiegel L."/>
            <person name="Sekhon M."/>
            <person name="Murray J."/>
            <person name="Sheet P."/>
            <person name="Cordes M."/>
            <person name="Abu-Threideh J."/>
            <person name="Stoneking T."/>
            <person name="Kalicki J."/>
            <person name="Graves T."/>
            <person name="Harmon G."/>
            <person name="Edwards J."/>
            <person name="Latreille P."/>
            <person name="Courtney L."/>
            <person name="Cloud J."/>
            <person name="Abbott A."/>
            <person name="Scott K."/>
            <person name="Johnson D."/>
            <person name="Minx P."/>
            <person name="Bentley D."/>
            <person name="Fulton B."/>
            <person name="Miller N."/>
            <person name="Greco T."/>
            <person name="Kemp K."/>
            <person name="Kramer J."/>
            <person name="Fulton L."/>
            <person name="Mardis E."/>
            <person name="Dante M."/>
            <person name="Pepin K."/>
            <person name="Hillier L.W."/>
            <person name="Nelson J."/>
            <person name="Spieth J."/>
            <person name="Ryan E."/>
            <person name="Andrews S."/>
            <person name="Geisel C."/>
            <person name="Layman D."/>
            <person name="Du H."/>
            <person name="Ali J."/>
            <person name="Berghoff A."/>
            <person name="Jones K."/>
            <person name="Drone K."/>
            <person name="Cotton M."/>
            <person name="Joshu C."/>
            <person name="Antonoiu B."/>
            <person name="Zidanic M."/>
            <person name="Strong C."/>
            <person name="Sun H."/>
            <person name="Lamar B."/>
            <person name="Yordan C."/>
            <person name="Ma P."/>
            <person name="Zhong J."/>
            <person name="Preston R."/>
            <person name="Vil D."/>
            <person name="Shekher M."/>
            <person name="Matero A."/>
            <person name="Shah R."/>
            <person name="Swaby I.K."/>
            <person name="O'Shaughnessy A."/>
            <person name="Rodriguez M."/>
            <person name="Hoffman J."/>
            <person name="Till S."/>
            <person name="Granat S."/>
            <person name="Shohdy N."/>
            <person name="Hasegawa A."/>
            <person name="Hameed A."/>
            <person name="Lodhi M."/>
            <person name="Johnson A."/>
            <person name="Chen E."/>
            <person name="Marra M.A."/>
            <person name="Martienssen R."/>
            <person name="McCombie W.R."/>
        </authorList>
    </citation>
    <scope>NUCLEOTIDE SEQUENCE [LARGE SCALE GENOMIC DNA]</scope>
    <source>
        <strain>cv. Columbia</strain>
    </source>
</reference>
<reference key="2">
    <citation type="journal article" date="2017" name="Plant J.">
        <title>Araport11: a complete reannotation of the Arabidopsis thaliana reference genome.</title>
        <authorList>
            <person name="Cheng C.Y."/>
            <person name="Krishnakumar V."/>
            <person name="Chan A.P."/>
            <person name="Thibaud-Nissen F."/>
            <person name="Schobel S."/>
            <person name="Town C.D."/>
        </authorList>
    </citation>
    <scope>GENOME REANNOTATION</scope>
    <source>
        <strain>cv. Columbia</strain>
    </source>
</reference>
<comment type="sequence caution" evidence="2">
    <conflict type="erroneous gene model prediction">
        <sequence resource="EMBL-CDS" id="CAB39946"/>
    </conflict>
    <text>The predicted gene has been split into 2 genes: At4g11745 and At4g11750.</text>
</comment>
<comment type="sequence caution" evidence="2">
    <conflict type="erroneous gene model prediction">
        <sequence resource="EMBL-CDS" id="CAB78218"/>
    </conflict>
    <text>The predicted gene has been split into 2 genes: At4g11745 and At4g11750.</text>
</comment>
<gene>
    <name type="ordered locus">At4g11750</name>
    <name type="ORF">T5C23.180</name>
</gene>
<proteinExistence type="predicted"/>
<organism>
    <name type="scientific">Arabidopsis thaliana</name>
    <name type="common">Mouse-ear cress</name>
    <dbReference type="NCBI Taxonomy" id="3702"/>
    <lineage>
        <taxon>Eukaryota</taxon>
        <taxon>Viridiplantae</taxon>
        <taxon>Streptophyta</taxon>
        <taxon>Embryophyta</taxon>
        <taxon>Tracheophyta</taxon>
        <taxon>Spermatophyta</taxon>
        <taxon>Magnoliopsida</taxon>
        <taxon>eudicotyledons</taxon>
        <taxon>Gunneridae</taxon>
        <taxon>Pentapetalae</taxon>
        <taxon>rosids</taxon>
        <taxon>malvids</taxon>
        <taxon>Brassicales</taxon>
        <taxon>Brassicaceae</taxon>
        <taxon>Camelineae</taxon>
        <taxon>Arabidopsis</taxon>
    </lineage>
</organism>
<accession>Q9T0E2</accession>
<accession>Q3EA53</accession>
<sequence>MMNPPVDLPYIPDDLLLNCLARVSRLYYPILSLVSKRFRSLVASLELYEIRKLLGHREKCLYLNLRFSSESEPRWFTLCRRPTRSPNPNFNSGWFASCFIPHTMKKEKKSSDNNLMVPVPTSNFITPPSELTRITNGSNIYIVRVFTNGAFSSRFLFMDCRSHTLHEVPRMDKTKKKPFMIRVLDGKIYVIEGCKNPDYSNLIERFDLKTQTWEHVPSPSAEIRGSYITGSLVYDGKLYLFGDKRVVYKPKENKWDVVGLEMPLRWTPSYISCVVDNVIYSYGRSRVLMWYNTEERLWRYLKGLKKLPKLPKDCTCVRLLGYSGKVVVLWEKNVGGGDPQKKMIWCAEIALERRSANKIYGKIEWCDVVLTLPRSCSLLNFAAVTV</sequence>
<name>FK124_ARATH</name>
<keyword id="KW-0880">Kelch repeat</keyword>
<keyword id="KW-1185">Reference proteome</keyword>
<keyword id="KW-0677">Repeat</keyword>
<feature type="chain" id="PRO_0000283279" description="Putative F-box/kelch-repeat protein At4g11750">
    <location>
        <begin position="1"/>
        <end position="386"/>
    </location>
</feature>
<feature type="domain" description="F-box" evidence="1">
    <location>
        <begin position="5"/>
        <end position="51"/>
    </location>
</feature>
<feature type="repeat" description="Kelch 1">
    <location>
        <begin position="187"/>
        <end position="236"/>
    </location>
</feature>
<feature type="repeat" description="Kelch 2">
    <location>
        <begin position="238"/>
        <end position="285"/>
    </location>
</feature>
<feature type="repeat" description="Kelch 3">
    <location>
        <begin position="287"/>
        <end position="324"/>
    </location>
</feature>
<protein>
    <recommendedName>
        <fullName>Putative F-box/kelch-repeat protein At4g11750</fullName>
    </recommendedName>
</protein>
<dbReference type="EMBL" id="AL049500">
    <property type="protein sequence ID" value="CAB39946.1"/>
    <property type="status" value="ALT_SEQ"/>
    <property type="molecule type" value="Genomic_DNA"/>
</dbReference>
<dbReference type="EMBL" id="AL161532">
    <property type="protein sequence ID" value="CAB78218.1"/>
    <property type="status" value="ALT_SEQ"/>
    <property type="molecule type" value="Genomic_DNA"/>
</dbReference>
<dbReference type="EMBL" id="CP002687">
    <property type="protein sequence ID" value="AEE83045.1"/>
    <property type="molecule type" value="Genomic_DNA"/>
</dbReference>
<dbReference type="PIR" id="T04222">
    <property type="entry name" value="T04222"/>
</dbReference>
<dbReference type="RefSeq" id="NP_192912.2">
    <property type="nucleotide sequence ID" value="NM_117244.2"/>
</dbReference>
<dbReference type="SMR" id="Q9T0E2"/>
<dbReference type="FunCoup" id="Q9T0E2">
    <property type="interactions" value="1"/>
</dbReference>
<dbReference type="GlyGen" id="Q9T0E2">
    <property type="glycosylation" value="1 site"/>
</dbReference>
<dbReference type="PaxDb" id="3702-AT4G11750.1"/>
<dbReference type="EnsemblPlants" id="AT4G11750.1">
    <property type="protein sequence ID" value="AT4G11750.1"/>
    <property type="gene ID" value="AT4G11750"/>
</dbReference>
<dbReference type="GeneID" id="826781"/>
<dbReference type="Gramene" id="AT4G11750.1">
    <property type="protein sequence ID" value="AT4G11750.1"/>
    <property type="gene ID" value="AT4G11750"/>
</dbReference>
<dbReference type="KEGG" id="ath:AT4G11750"/>
<dbReference type="Araport" id="AT4G11750"/>
<dbReference type="TAIR" id="AT4G11750"/>
<dbReference type="eggNOG" id="KOG1072">
    <property type="taxonomic scope" value="Eukaryota"/>
</dbReference>
<dbReference type="HOGENOM" id="CLU_032521_1_2_1"/>
<dbReference type="InParanoid" id="Q9T0E2"/>
<dbReference type="OMA" id="KWDVVGL"/>
<dbReference type="PhylomeDB" id="Q9T0E2"/>
<dbReference type="PRO" id="PR:Q9T0E2"/>
<dbReference type="Proteomes" id="UP000006548">
    <property type="component" value="Chromosome 4"/>
</dbReference>
<dbReference type="ExpressionAtlas" id="Q9T0E2">
    <property type="expression patterns" value="baseline and differential"/>
</dbReference>
<dbReference type="CDD" id="cd22152">
    <property type="entry name" value="F-box_AtAFR-like"/>
    <property type="match status" value="1"/>
</dbReference>
<dbReference type="Gene3D" id="2.120.10.80">
    <property type="entry name" value="Kelch-type beta propeller"/>
    <property type="match status" value="1"/>
</dbReference>
<dbReference type="InterPro" id="IPR050354">
    <property type="entry name" value="F-box/kelch-repeat_ARATH"/>
</dbReference>
<dbReference type="InterPro" id="IPR001810">
    <property type="entry name" value="F-box_dom"/>
</dbReference>
<dbReference type="InterPro" id="IPR015915">
    <property type="entry name" value="Kelch-typ_b-propeller"/>
</dbReference>
<dbReference type="PANTHER" id="PTHR24414">
    <property type="entry name" value="F-BOX/KELCH-REPEAT PROTEIN SKIP4"/>
    <property type="match status" value="1"/>
</dbReference>
<dbReference type="PANTHER" id="PTHR24414:SF82">
    <property type="entry name" value="GALACTOSE OXIDASE_KELCH REPEAT SUPERFAMILY PROTEIN"/>
    <property type="match status" value="1"/>
</dbReference>
<dbReference type="Pfam" id="PF00646">
    <property type="entry name" value="F-box"/>
    <property type="match status" value="1"/>
</dbReference>
<dbReference type="Pfam" id="PF25210">
    <property type="entry name" value="Kelch_FKB95"/>
    <property type="match status" value="1"/>
</dbReference>
<dbReference type="SMART" id="SM00256">
    <property type="entry name" value="FBOX"/>
    <property type="match status" value="1"/>
</dbReference>
<dbReference type="SUPFAM" id="SSF117281">
    <property type="entry name" value="Kelch motif"/>
    <property type="match status" value="1"/>
</dbReference>
<dbReference type="PROSITE" id="PS50181">
    <property type="entry name" value="FBOX"/>
    <property type="match status" value="1"/>
</dbReference>